<proteinExistence type="evidence at protein level"/>
<accession>Q9H596</accession>
<accession>Q0VDA6</accession>
<accession>Q6IAJ6</accession>
<accession>Q6YDQ8</accession>
<feature type="chain" id="PRO_0000094834" description="Dual specificity protein phosphatase 21">
    <location>
        <begin position="1"/>
        <end position="190"/>
    </location>
</feature>
<feature type="domain" description="Tyrosine-protein phosphatase" evidence="3">
    <location>
        <begin position="21"/>
        <end position="162"/>
    </location>
</feature>
<feature type="region of interest" description="Sufficient for mitochondrial localization" evidence="1">
    <location>
        <begin position="43"/>
        <end position="128"/>
    </location>
</feature>
<feature type="active site" description="Phosphocysteine intermediate" evidence="3">
    <location>
        <position position="106"/>
    </location>
</feature>
<feature type="sequence variant" id="VAR_035644" description="In a colorectal cancer sample; somatic mutation; dbSNP:rs1372839121." evidence="6">
    <original>R</original>
    <variation>C</variation>
    <location>
        <position position="167"/>
    </location>
</feature>
<feature type="sequence variant" id="VAR_019423" description="In dbSNP:rs1045031." evidence="7 8">
    <original>M</original>
    <variation>T</variation>
    <location>
        <position position="186"/>
    </location>
</feature>
<feature type="sequence conflict" description="In Ref. 3; CAG33440." evidence="9" ref="3">
    <original>M</original>
    <variation>I</variation>
    <location>
        <position position="190"/>
    </location>
</feature>
<keyword id="KW-0966">Cell projection</keyword>
<keyword id="KW-0969">Cilium</keyword>
<keyword id="KW-0963">Cytoplasm</keyword>
<keyword id="KW-0206">Cytoskeleton</keyword>
<keyword id="KW-0282">Flagellum</keyword>
<keyword id="KW-0378">Hydrolase</keyword>
<keyword id="KW-0472">Membrane</keyword>
<keyword id="KW-0496">Mitochondrion</keyword>
<keyword id="KW-0999">Mitochondrion inner membrane</keyword>
<keyword id="KW-0539">Nucleus</keyword>
<keyword id="KW-0904">Protein phosphatase</keyword>
<keyword id="KW-1267">Proteomics identification</keyword>
<keyword id="KW-1185">Reference proteome</keyword>
<gene>
    <name type="primary">DUSP21</name>
    <name type="synonym">LMWDSP21</name>
</gene>
<evidence type="ECO:0000250" key="1"/>
<evidence type="ECO:0000250" key="2">
    <source>
        <dbReference type="UniProtKB" id="Q9D9D8"/>
    </source>
</evidence>
<evidence type="ECO:0000255" key="3">
    <source>
        <dbReference type="PROSITE-ProRule" id="PRU00160"/>
    </source>
</evidence>
<evidence type="ECO:0000255" key="4">
    <source>
        <dbReference type="PROSITE-ProRule" id="PRU10044"/>
    </source>
</evidence>
<evidence type="ECO:0000269" key="5">
    <source>
    </source>
</evidence>
<evidence type="ECO:0000269" key="6">
    <source>
    </source>
</evidence>
<evidence type="ECO:0000269" key="7">
    <source ref="2"/>
</evidence>
<evidence type="ECO:0000269" key="8">
    <source ref="3"/>
</evidence>
<evidence type="ECO:0000305" key="9"/>
<organism>
    <name type="scientific">Homo sapiens</name>
    <name type="common">Human</name>
    <dbReference type="NCBI Taxonomy" id="9606"/>
    <lineage>
        <taxon>Eukaryota</taxon>
        <taxon>Metazoa</taxon>
        <taxon>Chordata</taxon>
        <taxon>Craniata</taxon>
        <taxon>Vertebrata</taxon>
        <taxon>Euteleostomi</taxon>
        <taxon>Mammalia</taxon>
        <taxon>Eutheria</taxon>
        <taxon>Euarchontoglires</taxon>
        <taxon>Primates</taxon>
        <taxon>Haplorrhini</taxon>
        <taxon>Catarrhini</taxon>
        <taxon>Hominidae</taxon>
        <taxon>Homo</taxon>
    </lineage>
</organism>
<sequence>MTASASSFSSSQGVQQPSIYSFSQITRSLFLSNGVAANDKLLLSSNRITAIVNASVEVVNVFFEGIQYIKVPVTDARDSRLYDFFDPIADLIHTIDMRQGRTLLHCMAGVSRSASLCLAYLMKYHSMSLLDAHTWTKSRRPIIRPNNGFWEQLINYEFKLFNNNTVRMINSPVGNIPDIYEKDLRMMISM</sequence>
<reference key="1">
    <citation type="journal article" date="2002" name="Biochem. Biophys. Res. Commun.">
        <title>Identification and characterization of two novel low-molecular-weight dual specificity phosphatases.</title>
        <authorList>
            <person name="Hood K.L."/>
            <person name="Tobin J.F."/>
            <person name="Yoon C."/>
        </authorList>
    </citation>
    <scope>NUCLEOTIDE SEQUENCE [MRNA]</scope>
    <scope>CHARACTERIZATION</scope>
    <scope>SUBCELLULAR LOCATION</scope>
    <scope>TISSUE SPECIFICITY</scope>
    <source>
        <tissue>Liver</tissue>
    </source>
</reference>
<reference key="2">
    <citation type="submission" date="2002-09" db="EMBL/GenBank/DDBJ databases">
        <title>Cloning and characterization of a new DUSP homolog gene.</title>
        <authorList>
            <person name="Mao Y."/>
            <person name="Xie Y."/>
            <person name="Dai J."/>
        </authorList>
    </citation>
    <scope>NUCLEOTIDE SEQUENCE [MRNA]</scope>
    <scope>VARIANT THR-186</scope>
</reference>
<reference key="3">
    <citation type="submission" date="2004-06" db="EMBL/GenBank/DDBJ databases">
        <title>Cloning of human full open reading frames in Gateway(TM) system entry vector (pDONR201).</title>
        <authorList>
            <person name="Ebert L."/>
            <person name="Schick M."/>
            <person name="Neubert P."/>
            <person name="Schatten R."/>
            <person name="Henze S."/>
            <person name="Korn B."/>
        </authorList>
    </citation>
    <scope>NUCLEOTIDE SEQUENCE [LARGE SCALE MRNA]</scope>
    <scope>VARIANT THR-186</scope>
</reference>
<reference key="4">
    <citation type="journal article" date="2005" name="Nature">
        <title>The DNA sequence of the human X chromosome.</title>
        <authorList>
            <person name="Ross M.T."/>
            <person name="Grafham D.V."/>
            <person name="Coffey A.J."/>
            <person name="Scherer S."/>
            <person name="McLay K."/>
            <person name="Muzny D."/>
            <person name="Platzer M."/>
            <person name="Howell G.R."/>
            <person name="Burrows C."/>
            <person name="Bird C.P."/>
            <person name="Frankish A."/>
            <person name="Lovell F.L."/>
            <person name="Howe K.L."/>
            <person name="Ashurst J.L."/>
            <person name="Fulton R.S."/>
            <person name="Sudbrak R."/>
            <person name="Wen G."/>
            <person name="Jones M.C."/>
            <person name="Hurles M.E."/>
            <person name="Andrews T.D."/>
            <person name="Scott C.E."/>
            <person name="Searle S."/>
            <person name="Ramser J."/>
            <person name="Whittaker A."/>
            <person name="Deadman R."/>
            <person name="Carter N.P."/>
            <person name="Hunt S.E."/>
            <person name="Chen R."/>
            <person name="Cree A."/>
            <person name="Gunaratne P."/>
            <person name="Havlak P."/>
            <person name="Hodgson A."/>
            <person name="Metzker M.L."/>
            <person name="Richards S."/>
            <person name="Scott G."/>
            <person name="Steffen D."/>
            <person name="Sodergren E."/>
            <person name="Wheeler D.A."/>
            <person name="Worley K.C."/>
            <person name="Ainscough R."/>
            <person name="Ambrose K.D."/>
            <person name="Ansari-Lari M.A."/>
            <person name="Aradhya S."/>
            <person name="Ashwell R.I."/>
            <person name="Babbage A.K."/>
            <person name="Bagguley C.L."/>
            <person name="Ballabio A."/>
            <person name="Banerjee R."/>
            <person name="Barker G.E."/>
            <person name="Barlow K.F."/>
            <person name="Barrett I.P."/>
            <person name="Bates K.N."/>
            <person name="Beare D.M."/>
            <person name="Beasley H."/>
            <person name="Beasley O."/>
            <person name="Beck A."/>
            <person name="Bethel G."/>
            <person name="Blechschmidt K."/>
            <person name="Brady N."/>
            <person name="Bray-Allen S."/>
            <person name="Bridgeman A.M."/>
            <person name="Brown A.J."/>
            <person name="Brown M.J."/>
            <person name="Bonnin D."/>
            <person name="Bruford E.A."/>
            <person name="Buhay C."/>
            <person name="Burch P."/>
            <person name="Burford D."/>
            <person name="Burgess J."/>
            <person name="Burrill W."/>
            <person name="Burton J."/>
            <person name="Bye J.M."/>
            <person name="Carder C."/>
            <person name="Carrel L."/>
            <person name="Chako J."/>
            <person name="Chapman J.C."/>
            <person name="Chavez D."/>
            <person name="Chen E."/>
            <person name="Chen G."/>
            <person name="Chen Y."/>
            <person name="Chen Z."/>
            <person name="Chinault C."/>
            <person name="Ciccodicola A."/>
            <person name="Clark S.Y."/>
            <person name="Clarke G."/>
            <person name="Clee C.M."/>
            <person name="Clegg S."/>
            <person name="Clerc-Blankenburg K."/>
            <person name="Clifford K."/>
            <person name="Cobley V."/>
            <person name="Cole C.G."/>
            <person name="Conquer J.S."/>
            <person name="Corby N."/>
            <person name="Connor R.E."/>
            <person name="David R."/>
            <person name="Davies J."/>
            <person name="Davis C."/>
            <person name="Davis J."/>
            <person name="Delgado O."/>
            <person name="Deshazo D."/>
            <person name="Dhami P."/>
            <person name="Ding Y."/>
            <person name="Dinh H."/>
            <person name="Dodsworth S."/>
            <person name="Draper H."/>
            <person name="Dugan-Rocha S."/>
            <person name="Dunham A."/>
            <person name="Dunn M."/>
            <person name="Durbin K.J."/>
            <person name="Dutta I."/>
            <person name="Eades T."/>
            <person name="Ellwood M."/>
            <person name="Emery-Cohen A."/>
            <person name="Errington H."/>
            <person name="Evans K.L."/>
            <person name="Faulkner L."/>
            <person name="Francis F."/>
            <person name="Frankland J."/>
            <person name="Fraser A.E."/>
            <person name="Galgoczy P."/>
            <person name="Gilbert J."/>
            <person name="Gill R."/>
            <person name="Gloeckner G."/>
            <person name="Gregory S.G."/>
            <person name="Gribble S."/>
            <person name="Griffiths C."/>
            <person name="Grocock R."/>
            <person name="Gu Y."/>
            <person name="Gwilliam R."/>
            <person name="Hamilton C."/>
            <person name="Hart E.A."/>
            <person name="Hawes A."/>
            <person name="Heath P.D."/>
            <person name="Heitmann K."/>
            <person name="Hennig S."/>
            <person name="Hernandez J."/>
            <person name="Hinzmann B."/>
            <person name="Ho S."/>
            <person name="Hoffs M."/>
            <person name="Howden P.J."/>
            <person name="Huckle E.J."/>
            <person name="Hume J."/>
            <person name="Hunt P.J."/>
            <person name="Hunt A.R."/>
            <person name="Isherwood J."/>
            <person name="Jacob L."/>
            <person name="Johnson D."/>
            <person name="Jones S."/>
            <person name="de Jong P.J."/>
            <person name="Joseph S.S."/>
            <person name="Keenan S."/>
            <person name="Kelly S."/>
            <person name="Kershaw J.K."/>
            <person name="Khan Z."/>
            <person name="Kioschis P."/>
            <person name="Klages S."/>
            <person name="Knights A.J."/>
            <person name="Kosiura A."/>
            <person name="Kovar-Smith C."/>
            <person name="Laird G.K."/>
            <person name="Langford C."/>
            <person name="Lawlor S."/>
            <person name="Leversha M."/>
            <person name="Lewis L."/>
            <person name="Liu W."/>
            <person name="Lloyd C."/>
            <person name="Lloyd D.M."/>
            <person name="Loulseged H."/>
            <person name="Loveland J.E."/>
            <person name="Lovell J.D."/>
            <person name="Lozado R."/>
            <person name="Lu J."/>
            <person name="Lyne R."/>
            <person name="Ma J."/>
            <person name="Maheshwari M."/>
            <person name="Matthews L.H."/>
            <person name="McDowall J."/>
            <person name="McLaren S."/>
            <person name="McMurray A."/>
            <person name="Meidl P."/>
            <person name="Meitinger T."/>
            <person name="Milne S."/>
            <person name="Miner G."/>
            <person name="Mistry S.L."/>
            <person name="Morgan M."/>
            <person name="Morris S."/>
            <person name="Mueller I."/>
            <person name="Mullikin J.C."/>
            <person name="Nguyen N."/>
            <person name="Nordsiek G."/>
            <person name="Nyakatura G."/>
            <person name="O'dell C.N."/>
            <person name="Okwuonu G."/>
            <person name="Palmer S."/>
            <person name="Pandian R."/>
            <person name="Parker D."/>
            <person name="Parrish J."/>
            <person name="Pasternak S."/>
            <person name="Patel D."/>
            <person name="Pearce A.V."/>
            <person name="Pearson D.M."/>
            <person name="Pelan S.E."/>
            <person name="Perez L."/>
            <person name="Porter K.M."/>
            <person name="Ramsey Y."/>
            <person name="Reichwald K."/>
            <person name="Rhodes S."/>
            <person name="Ridler K.A."/>
            <person name="Schlessinger D."/>
            <person name="Schueler M.G."/>
            <person name="Sehra H.K."/>
            <person name="Shaw-Smith C."/>
            <person name="Shen H."/>
            <person name="Sheridan E.M."/>
            <person name="Shownkeen R."/>
            <person name="Skuce C.D."/>
            <person name="Smith M.L."/>
            <person name="Sotheran E.C."/>
            <person name="Steingruber H.E."/>
            <person name="Steward C.A."/>
            <person name="Storey R."/>
            <person name="Swann R.M."/>
            <person name="Swarbreck D."/>
            <person name="Tabor P.E."/>
            <person name="Taudien S."/>
            <person name="Taylor T."/>
            <person name="Teague B."/>
            <person name="Thomas K."/>
            <person name="Thorpe A."/>
            <person name="Timms K."/>
            <person name="Tracey A."/>
            <person name="Trevanion S."/>
            <person name="Tromans A.C."/>
            <person name="d'Urso M."/>
            <person name="Verduzco D."/>
            <person name="Villasana D."/>
            <person name="Waldron L."/>
            <person name="Wall M."/>
            <person name="Wang Q."/>
            <person name="Warren J."/>
            <person name="Warry G.L."/>
            <person name="Wei X."/>
            <person name="West A."/>
            <person name="Whitehead S.L."/>
            <person name="Whiteley M.N."/>
            <person name="Wilkinson J.E."/>
            <person name="Willey D.L."/>
            <person name="Williams G."/>
            <person name="Williams L."/>
            <person name="Williamson A."/>
            <person name="Williamson H."/>
            <person name="Wilming L."/>
            <person name="Woodmansey R.L."/>
            <person name="Wray P.W."/>
            <person name="Yen J."/>
            <person name="Zhang J."/>
            <person name="Zhou J."/>
            <person name="Zoghbi H."/>
            <person name="Zorilla S."/>
            <person name="Buck D."/>
            <person name="Reinhardt R."/>
            <person name="Poustka A."/>
            <person name="Rosenthal A."/>
            <person name="Lehrach H."/>
            <person name="Meindl A."/>
            <person name="Minx P.J."/>
            <person name="Hillier L.W."/>
            <person name="Willard H.F."/>
            <person name="Wilson R.K."/>
            <person name="Waterston R.H."/>
            <person name="Rice C.M."/>
            <person name="Vaudin M."/>
            <person name="Coulson A."/>
            <person name="Nelson D.L."/>
            <person name="Weinstock G."/>
            <person name="Sulston J.E."/>
            <person name="Durbin R.M."/>
            <person name="Hubbard T."/>
            <person name="Gibbs R.A."/>
            <person name="Beck S."/>
            <person name="Rogers J."/>
            <person name="Bentley D.R."/>
        </authorList>
    </citation>
    <scope>NUCLEOTIDE SEQUENCE [LARGE SCALE GENOMIC DNA]</scope>
</reference>
<reference key="5">
    <citation type="journal article" date="2004" name="Genome Res.">
        <title>The status, quality, and expansion of the NIH full-length cDNA project: the Mammalian Gene Collection (MGC).</title>
        <authorList>
            <consortium name="The MGC Project Team"/>
        </authorList>
    </citation>
    <scope>NUCLEOTIDE SEQUENCE [LARGE SCALE MRNA]</scope>
</reference>
<reference key="6">
    <citation type="journal article" date="2006" name="Science">
        <title>The consensus coding sequences of human breast and colorectal cancers.</title>
        <authorList>
            <person name="Sjoeblom T."/>
            <person name="Jones S."/>
            <person name="Wood L.D."/>
            <person name="Parsons D.W."/>
            <person name="Lin J."/>
            <person name="Barber T.D."/>
            <person name="Mandelker D."/>
            <person name="Leary R.J."/>
            <person name="Ptak J."/>
            <person name="Silliman N."/>
            <person name="Szabo S."/>
            <person name="Buckhaults P."/>
            <person name="Farrell C."/>
            <person name="Meeh P."/>
            <person name="Markowitz S.D."/>
            <person name="Willis J."/>
            <person name="Dawson D."/>
            <person name="Willson J.K.V."/>
            <person name="Gazdar A.F."/>
            <person name="Hartigan J."/>
            <person name="Wu L."/>
            <person name="Liu C."/>
            <person name="Parmigiani G."/>
            <person name="Park B.H."/>
            <person name="Bachman K.E."/>
            <person name="Papadopoulos N."/>
            <person name="Vogelstein B."/>
            <person name="Kinzler K.W."/>
            <person name="Velculescu V.E."/>
        </authorList>
    </citation>
    <scope>VARIANT [LARGE SCALE ANALYSIS] CYS-167</scope>
</reference>
<protein>
    <recommendedName>
        <fullName>Dual specificity protein phosphatase 21</fullName>
        <ecNumber>3.1.3.16</ecNumber>
        <ecNumber>3.1.3.48</ecNumber>
    </recommendedName>
    <alternativeName>
        <fullName>Low molecular weight dual specificity phosphatase 21</fullName>
        <shortName>LMW-DSP21</shortName>
    </alternativeName>
</protein>
<dbReference type="EC" id="3.1.3.16"/>
<dbReference type="EC" id="3.1.3.48"/>
<dbReference type="EMBL" id="AF533018">
    <property type="protein sequence ID" value="AAN59788.1"/>
    <property type="molecule type" value="mRNA"/>
</dbReference>
<dbReference type="EMBL" id="AY156515">
    <property type="protein sequence ID" value="AAO17295.1"/>
    <property type="molecule type" value="mRNA"/>
</dbReference>
<dbReference type="EMBL" id="CR457159">
    <property type="protein sequence ID" value="CAG33440.1"/>
    <property type="molecule type" value="mRNA"/>
</dbReference>
<dbReference type="EMBL" id="AL133545">
    <property type="status" value="NOT_ANNOTATED_CDS"/>
    <property type="molecule type" value="Genomic_DNA"/>
</dbReference>
<dbReference type="EMBL" id="BC119755">
    <property type="protein sequence ID" value="AAI19756.1"/>
    <property type="molecule type" value="mRNA"/>
</dbReference>
<dbReference type="EMBL" id="BC119756">
    <property type="protein sequence ID" value="AAI19757.1"/>
    <property type="molecule type" value="mRNA"/>
</dbReference>
<dbReference type="CCDS" id="CCDS14264.1"/>
<dbReference type="RefSeq" id="NP_071359.3">
    <property type="nucleotide sequence ID" value="NM_022076.3"/>
</dbReference>
<dbReference type="SMR" id="Q9H596"/>
<dbReference type="BioGRID" id="121980">
    <property type="interactions" value="85"/>
</dbReference>
<dbReference type="FunCoup" id="Q9H596">
    <property type="interactions" value="63"/>
</dbReference>
<dbReference type="IntAct" id="Q9H596">
    <property type="interactions" value="39"/>
</dbReference>
<dbReference type="MINT" id="Q9H596"/>
<dbReference type="STRING" id="9606.ENSP00000343244"/>
<dbReference type="DEPOD" id="DUSP21"/>
<dbReference type="iPTMnet" id="Q9H596"/>
<dbReference type="PhosphoSitePlus" id="Q9H596"/>
<dbReference type="BioMuta" id="DUSP21"/>
<dbReference type="DMDM" id="50400652"/>
<dbReference type="jPOST" id="Q9H596"/>
<dbReference type="MassIVE" id="Q9H596"/>
<dbReference type="PaxDb" id="9606-ENSP00000343244"/>
<dbReference type="PeptideAtlas" id="Q9H596"/>
<dbReference type="ProteomicsDB" id="80901"/>
<dbReference type="Antibodypedia" id="25173">
    <property type="antibodies" value="44 antibodies from 11 providers"/>
</dbReference>
<dbReference type="DNASU" id="63904"/>
<dbReference type="Ensembl" id="ENST00000339042.6">
    <property type="protein sequence ID" value="ENSP00000343244.4"/>
    <property type="gene ID" value="ENSG00000189037.8"/>
</dbReference>
<dbReference type="GeneID" id="63904"/>
<dbReference type="KEGG" id="hsa:63904"/>
<dbReference type="MANE-Select" id="ENST00000339042.6">
    <property type="protein sequence ID" value="ENSP00000343244.4"/>
    <property type="RefSeq nucleotide sequence ID" value="NM_022076.4"/>
    <property type="RefSeq protein sequence ID" value="NP_071359.3"/>
</dbReference>
<dbReference type="UCSC" id="uc004dgd.4">
    <property type="organism name" value="human"/>
</dbReference>
<dbReference type="AGR" id="HGNC:20476"/>
<dbReference type="CTD" id="63904"/>
<dbReference type="DisGeNET" id="63904"/>
<dbReference type="GeneCards" id="DUSP21"/>
<dbReference type="HGNC" id="HGNC:20476">
    <property type="gene designation" value="DUSP21"/>
</dbReference>
<dbReference type="HPA" id="ENSG00000189037">
    <property type="expression patterns" value="Tissue enriched (testis)"/>
</dbReference>
<dbReference type="MIM" id="300678">
    <property type="type" value="gene"/>
</dbReference>
<dbReference type="neXtProt" id="NX_Q9H596"/>
<dbReference type="OpenTargets" id="ENSG00000189037"/>
<dbReference type="PharmGKB" id="PA134967875"/>
<dbReference type="VEuPathDB" id="HostDB:ENSG00000189037"/>
<dbReference type="eggNOG" id="KOG1718">
    <property type="taxonomic scope" value="Eukaryota"/>
</dbReference>
<dbReference type="GeneTree" id="ENSGT00940000163638"/>
<dbReference type="HOGENOM" id="CLU_027074_3_2_1"/>
<dbReference type="InParanoid" id="Q9H596"/>
<dbReference type="OMA" id="GVEYFHI"/>
<dbReference type="OrthoDB" id="285418at2759"/>
<dbReference type="PAN-GO" id="Q9H596">
    <property type="GO annotations" value="3 GO annotations based on evolutionary models"/>
</dbReference>
<dbReference type="PhylomeDB" id="Q9H596"/>
<dbReference type="TreeFam" id="TF316009"/>
<dbReference type="PathwayCommons" id="Q9H596"/>
<dbReference type="SignaLink" id="Q9H596"/>
<dbReference type="BioGRID-ORCS" id="63904">
    <property type="hits" value="13 hits in 786 CRISPR screens"/>
</dbReference>
<dbReference type="GenomeRNAi" id="63904"/>
<dbReference type="Pharos" id="Q9H596">
    <property type="development level" value="Tdark"/>
</dbReference>
<dbReference type="PRO" id="PR:Q9H596"/>
<dbReference type="Proteomes" id="UP000005640">
    <property type="component" value="Chromosome X"/>
</dbReference>
<dbReference type="RNAct" id="Q9H596">
    <property type="molecule type" value="protein"/>
</dbReference>
<dbReference type="Bgee" id="ENSG00000189037">
    <property type="expression patterns" value="Expressed in male germ line stem cell (sensu Vertebrata) in testis and 22 other cell types or tissues"/>
</dbReference>
<dbReference type="GO" id="GO:0160111">
    <property type="term" value="C:axonemal A tubule inner sheath"/>
    <property type="evidence" value="ECO:0000250"/>
    <property type="project" value="UniProtKB"/>
</dbReference>
<dbReference type="GO" id="GO:0005737">
    <property type="term" value="C:cytoplasm"/>
    <property type="evidence" value="ECO:0000314"/>
    <property type="project" value="UniProtKB"/>
</dbReference>
<dbReference type="GO" id="GO:0005743">
    <property type="term" value="C:mitochondrial inner membrane"/>
    <property type="evidence" value="ECO:0007669"/>
    <property type="project" value="UniProtKB-SubCell"/>
</dbReference>
<dbReference type="GO" id="GO:0005759">
    <property type="term" value="C:mitochondrial matrix"/>
    <property type="evidence" value="ECO:0007669"/>
    <property type="project" value="Ensembl"/>
</dbReference>
<dbReference type="GO" id="GO:0005634">
    <property type="term" value="C:nucleus"/>
    <property type="evidence" value="ECO:0000314"/>
    <property type="project" value="UniProtKB"/>
</dbReference>
<dbReference type="GO" id="GO:0036126">
    <property type="term" value="C:sperm flagellum"/>
    <property type="evidence" value="ECO:0000250"/>
    <property type="project" value="UniProtKB"/>
</dbReference>
<dbReference type="GO" id="GO:0017017">
    <property type="term" value="F:MAP kinase tyrosine/serine/threonine phosphatase activity"/>
    <property type="evidence" value="ECO:0007669"/>
    <property type="project" value="InterPro"/>
</dbReference>
<dbReference type="GO" id="GO:0004722">
    <property type="term" value="F:protein serine/threonine phosphatase activity"/>
    <property type="evidence" value="ECO:0007669"/>
    <property type="project" value="UniProtKB-EC"/>
</dbReference>
<dbReference type="GO" id="GO:0004725">
    <property type="term" value="F:protein tyrosine phosphatase activity"/>
    <property type="evidence" value="ECO:0000314"/>
    <property type="project" value="UniProtKB"/>
</dbReference>
<dbReference type="GO" id="GO:0030317">
    <property type="term" value="P:flagellated sperm motility"/>
    <property type="evidence" value="ECO:0000250"/>
    <property type="project" value="UniProtKB"/>
</dbReference>
<dbReference type="GO" id="GO:0035335">
    <property type="term" value="P:peptidyl-tyrosine dephosphorylation"/>
    <property type="evidence" value="ECO:0000314"/>
    <property type="project" value="UniProtKB"/>
</dbReference>
<dbReference type="CDD" id="cd14573">
    <property type="entry name" value="DUSP18_21"/>
    <property type="match status" value="1"/>
</dbReference>
<dbReference type="FunFam" id="3.90.190.10:FF:000049">
    <property type="entry name" value="Dual specificity protein phosphatase 14"/>
    <property type="match status" value="1"/>
</dbReference>
<dbReference type="Gene3D" id="3.90.190.10">
    <property type="entry name" value="Protein tyrosine phosphatase superfamily"/>
    <property type="match status" value="1"/>
</dbReference>
<dbReference type="InterPro" id="IPR020420">
    <property type="entry name" value="Atypical_DUSP_subfamB"/>
</dbReference>
<dbReference type="InterPro" id="IPR000340">
    <property type="entry name" value="Dual-sp_phosphatase_cat-dom"/>
</dbReference>
<dbReference type="InterPro" id="IPR029021">
    <property type="entry name" value="Prot-tyrosine_phosphatase-like"/>
</dbReference>
<dbReference type="InterPro" id="IPR016130">
    <property type="entry name" value="Tyr_Pase_AS"/>
</dbReference>
<dbReference type="InterPro" id="IPR000387">
    <property type="entry name" value="Tyr_Pase_dom"/>
</dbReference>
<dbReference type="InterPro" id="IPR020422">
    <property type="entry name" value="TYR_PHOSPHATASE_DUAL_dom"/>
</dbReference>
<dbReference type="PANTHER" id="PTHR46495">
    <property type="entry name" value="DUAL SPECIFICITY PROTEIN PHOSPHATASE 21"/>
    <property type="match status" value="1"/>
</dbReference>
<dbReference type="PANTHER" id="PTHR46495:SF3">
    <property type="entry name" value="DUAL SPECIFICITY PROTEIN PHOSPHATASE 21"/>
    <property type="match status" value="1"/>
</dbReference>
<dbReference type="Pfam" id="PF00782">
    <property type="entry name" value="DSPc"/>
    <property type="match status" value="1"/>
</dbReference>
<dbReference type="PRINTS" id="PR01908">
    <property type="entry name" value="ADSPHPHTASE"/>
</dbReference>
<dbReference type="PRINTS" id="PR01910">
    <property type="entry name" value="ADSPHPHTASEB"/>
</dbReference>
<dbReference type="SMART" id="SM00195">
    <property type="entry name" value="DSPc"/>
    <property type="match status" value="1"/>
</dbReference>
<dbReference type="SUPFAM" id="SSF52799">
    <property type="entry name" value="(Phosphotyrosine protein) phosphatases II"/>
    <property type="match status" value="1"/>
</dbReference>
<dbReference type="PROSITE" id="PS00383">
    <property type="entry name" value="TYR_PHOSPHATASE_1"/>
    <property type="match status" value="1"/>
</dbReference>
<dbReference type="PROSITE" id="PS50056">
    <property type="entry name" value="TYR_PHOSPHATASE_2"/>
    <property type="match status" value="1"/>
</dbReference>
<dbReference type="PROSITE" id="PS50054">
    <property type="entry name" value="TYR_PHOSPHATASE_DUAL"/>
    <property type="match status" value="1"/>
</dbReference>
<name>DUS21_HUMAN</name>
<comment type="function">
    <text evidence="2">Protein phosphatase component of the sperm flagellar doublet microtubules (By similarity). May act as a regulator of sperm motility by mediating dephosphorylation of sperm doublet microtubule proteins (By similarity). Can dephosphorylate single and diphosphorylated synthetic MAPK peptides, with preference for the phosphotyrosine and diphosphorylated forms over phosphothreonine (By similarity).</text>
</comment>
<comment type="catalytic activity">
    <reaction evidence="4">
        <text>O-phospho-L-tyrosyl-[protein] + H2O = L-tyrosyl-[protein] + phosphate</text>
        <dbReference type="Rhea" id="RHEA:10684"/>
        <dbReference type="Rhea" id="RHEA-COMP:10136"/>
        <dbReference type="Rhea" id="RHEA-COMP:20101"/>
        <dbReference type="ChEBI" id="CHEBI:15377"/>
        <dbReference type="ChEBI" id="CHEBI:43474"/>
        <dbReference type="ChEBI" id="CHEBI:46858"/>
        <dbReference type="ChEBI" id="CHEBI:61978"/>
        <dbReference type="EC" id="3.1.3.48"/>
    </reaction>
</comment>
<comment type="catalytic activity">
    <reaction evidence="2">
        <text>O-phospho-L-seryl-[protein] + H2O = L-seryl-[protein] + phosphate</text>
        <dbReference type="Rhea" id="RHEA:20629"/>
        <dbReference type="Rhea" id="RHEA-COMP:9863"/>
        <dbReference type="Rhea" id="RHEA-COMP:11604"/>
        <dbReference type="ChEBI" id="CHEBI:15377"/>
        <dbReference type="ChEBI" id="CHEBI:29999"/>
        <dbReference type="ChEBI" id="CHEBI:43474"/>
        <dbReference type="ChEBI" id="CHEBI:83421"/>
        <dbReference type="EC" id="3.1.3.16"/>
    </reaction>
</comment>
<comment type="catalytic activity">
    <reaction evidence="2">
        <text>O-phospho-L-threonyl-[protein] + H2O = L-threonyl-[protein] + phosphate</text>
        <dbReference type="Rhea" id="RHEA:47004"/>
        <dbReference type="Rhea" id="RHEA-COMP:11060"/>
        <dbReference type="Rhea" id="RHEA-COMP:11605"/>
        <dbReference type="ChEBI" id="CHEBI:15377"/>
        <dbReference type="ChEBI" id="CHEBI:30013"/>
        <dbReference type="ChEBI" id="CHEBI:43474"/>
        <dbReference type="ChEBI" id="CHEBI:61977"/>
        <dbReference type="EC" id="3.1.3.16"/>
    </reaction>
</comment>
<comment type="subunit">
    <text evidence="2">Microtubule inner protein component of sperm flagellar doublet microtubules.</text>
</comment>
<comment type="interaction">
    <interactant intactId="EBI-7357329">
        <id>Q9H596</id>
    </interactant>
    <interactant intactId="EBI-12811889">
        <id>Q9Y6H3</id>
        <label>ATP23</label>
    </interactant>
    <organismsDiffer>false</organismsDiffer>
    <experiments>3</experiments>
</comment>
<comment type="interaction">
    <interactant intactId="EBI-7357329">
        <id>Q9H596</id>
    </interactant>
    <interactant intactId="EBI-953896">
        <id>Q9NP55</id>
        <label>BPIFA1</label>
    </interactant>
    <organismsDiffer>false</organismsDiffer>
    <experiments>3</experiments>
</comment>
<comment type="interaction">
    <interactant intactId="EBI-7357329">
        <id>Q9H596</id>
    </interactant>
    <interactant intactId="EBI-12012272">
        <id>Q9UBL6-2</id>
        <label>CPNE7</label>
    </interactant>
    <organismsDiffer>false</organismsDiffer>
    <experiments>3</experiments>
</comment>
<comment type="interaction">
    <interactant intactId="EBI-7357329">
        <id>Q9H596</id>
    </interactant>
    <interactant intactId="EBI-10171902">
        <id>P56545-3</id>
        <label>CTBP2</label>
    </interactant>
    <organismsDiffer>false</organismsDiffer>
    <experiments>3</experiments>
</comment>
<comment type="interaction">
    <interactant intactId="EBI-7357329">
        <id>Q9H596</id>
    </interactant>
    <interactant intactId="EBI-12807776">
        <id>O00167-2</id>
        <label>EYA2</label>
    </interactant>
    <organismsDiffer>false</organismsDiffer>
    <experiments>3</experiments>
</comment>
<comment type="interaction">
    <interactant intactId="EBI-7357329">
        <id>Q9H596</id>
    </interactant>
    <interactant intactId="EBI-12013806">
        <id>Q6NZ36-4</id>
        <label>FAAP20</label>
    </interactant>
    <organismsDiffer>false</organismsDiffer>
    <experiments>3</experiments>
</comment>
<comment type="interaction">
    <interactant intactId="EBI-7357329">
        <id>Q9H596</id>
    </interactant>
    <interactant intactId="EBI-711823">
        <id>Q7L5D6</id>
        <label>GET4</label>
    </interactant>
    <organismsDiffer>false</organismsDiffer>
    <experiments>3</experiments>
</comment>
<comment type="interaction">
    <interactant intactId="EBI-7357329">
        <id>Q9H596</id>
    </interactant>
    <interactant intactId="EBI-739467">
        <id>Q9H8Y8</id>
        <label>GORASP2</label>
    </interactant>
    <organismsDiffer>false</organismsDiffer>
    <experiments>7</experiments>
</comment>
<comment type="interaction">
    <interactant intactId="EBI-7357329">
        <id>Q9H596</id>
    </interactant>
    <interactant intactId="EBI-10693436">
        <id>Q9BS75</id>
        <label>KLHL20</label>
    </interactant>
    <organismsDiffer>false</organismsDiffer>
    <experiments>3</experiments>
</comment>
<comment type="interaction">
    <interactant intactId="EBI-7357329">
        <id>Q9H596</id>
    </interactant>
    <interactant intactId="EBI-1049638">
        <id>Q14525</id>
        <label>KRT33B</label>
    </interactant>
    <organismsDiffer>false</organismsDiffer>
    <experiments>3</experiments>
</comment>
<comment type="interaction">
    <interactant intactId="EBI-7357329">
        <id>Q9H596</id>
    </interactant>
    <interactant intactId="EBI-1052037">
        <id>Q8IUC1</id>
        <label>KRTAP11-1</label>
    </interactant>
    <organismsDiffer>false</organismsDiffer>
    <experiments>3</experiments>
</comment>
<comment type="interaction">
    <interactant intactId="EBI-7357329">
        <id>Q9H596</id>
    </interactant>
    <interactant intactId="EBI-307294">
        <id>Q13163</id>
        <label>MAP2K5</label>
    </interactant>
    <organismsDiffer>false</organismsDiffer>
    <experiments>3</experiments>
</comment>
<comment type="interaction">
    <interactant intactId="EBI-7357329">
        <id>Q9H596</id>
    </interactant>
    <interactant intactId="EBI-7950783">
        <id>Q96JP2</id>
        <label>MYO15B</label>
    </interactant>
    <organismsDiffer>false</organismsDiffer>
    <experiments>3</experiments>
</comment>
<comment type="interaction">
    <interactant intactId="EBI-7357329">
        <id>Q9H596</id>
    </interactant>
    <interactant intactId="EBI-536879">
        <id>O43482</id>
        <label>OIP5</label>
    </interactant>
    <organismsDiffer>false</organismsDiffer>
    <experiments>3</experiments>
</comment>
<comment type="interaction">
    <interactant intactId="EBI-7357329">
        <id>Q9H596</id>
    </interactant>
    <interactant intactId="EBI-12033574">
        <id>Q15319</id>
        <label>POU4F3</label>
    </interactant>
    <organismsDiffer>false</organismsDiffer>
    <experiments>3</experiments>
</comment>
<comment type="interaction">
    <interactant intactId="EBI-7357329">
        <id>Q9H596</id>
    </interactant>
    <interactant intactId="EBI-746118">
        <id>Q8HWS3</id>
        <label>RFX6</label>
    </interactant>
    <organismsDiffer>false</organismsDiffer>
    <experiments>3</experiments>
</comment>
<comment type="interaction">
    <interactant intactId="EBI-7357329">
        <id>Q9H596</id>
    </interactant>
    <interactant intactId="EBI-3921347">
        <id>P51687</id>
        <label>SUOX</label>
    </interactant>
    <organismsDiffer>false</organismsDiffer>
    <experiments>3</experiments>
</comment>
<comment type="interaction">
    <interactant intactId="EBI-7357329">
        <id>Q9H596</id>
    </interactant>
    <interactant intactId="EBI-742397">
        <id>Q8IYF3</id>
        <label>TEX11</label>
    </interactant>
    <organismsDiffer>false</organismsDiffer>
    <experiments>3</experiments>
</comment>
<comment type="interaction">
    <interactant intactId="EBI-7357329">
        <id>Q9H596</id>
    </interactant>
    <interactant intactId="EBI-11523345">
        <id>Q8IYF3-3</id>
        <label>TEX11</label>
    </interactant>
    <organismsDiffer>false</organismsDiffer>
    <experiments>3</experiments>
</comment>
<comment type="interaction">
    <interactant intactId="EBI-7357329">
        <id>Q9H596</id>
    </interactant>
    <interactant intactId="EBI-359224">
        <id>Q13077</id>
        <label>TRAF1</label>
    </interactant>
    <organismsDiffer>false</organismsDiffer>
    <experiments>3</experiments>
</comment>
<comment type="interaction">
    <interactant intactId="EBI-7357329">
        <id>Q9H596</id>
    </interactant>
    <interactant intactId="EBI-947187">
        <id>Q9UHD9</id>
        <label>UBQLN2</label>
    </interactant>
    <organismsDiffer>false</organismsDiffer>
    <experiments>5</experiments>
</comment>
<comment type="interaction">
    <interactant intactId="EBI-7357329">
        <id>Q9H596</id>
    </interactant>
    <interactant intactId="EBI-743272">
        <id>O75604</id>
        <label>USP2</label>
    </interactant>
    <organismsDiffer>false</organismsDiffer>
    <experiments>3</experiments>
</comment>
<comment type="subcellular location">
    <subcellularLocation>
        <location evidence="5">Cytoplasm</location>
    </subcellularLocation>
    <subcellularLocation>
        <location evidence="5">Nucleus</location>
    </subcellularLocation>
    <subcellularLocation>
        <location evidence="2">Mitochondrion inner membrane</location>
        <topology evidence="2">Peripheral membrane protein</topology>
        <orientation evidence="2">Matrix side</orientation>
    </subcellularLocation>
    <subcellularLocation>
        <location evidence="2">Cytoplasm</location>
        <location evidence="2">Cytoskeleton</location>
        <location evidence="2">Flagellum axoneme</location>
    </subcellularLocation>
</comment>
<comment type="tissue specificity">
    <text evidence="5">Expressed in testis.</text>
</comment>
<comment type="similarity">
    <text evidence="9">Belongs to the protein-tyrosine phosphatase family. Non-receptor class dual specificity subfamily.</text>
</comment>